<feature type="chain" id="PRO_0000374620" description="tRNA-2-methylthio-N(6)-dimethylallyladenosine synthase">
    <location>
        <begin position="1"/>
        <end position="477"/>
    </location>
</feature>
<feature type="domain" description="MTTase N-terminal" evidence="1">
    <location>
        <begin position="13"/>
        <end position="130"/>
    </location>
</feature>
<feature type="domain" description="Radical SAM core" evidence="2">
    <location>
        <begin position="164"/>
        <end position="396"/>
    </location>
</feature>
<feature type="domain" description="TRAM" evidence="1">
    <location>
        <begin position="399"/>
        <end position="462"/>
    </location>
</feature>
<feature type="binding site" evidence="1">
    <location>
        <position position="22"/>
    </location>
    <ligand>
        <name>[4Fe-4S] cluster</name>
        <dbReference type="ChEBI" id="CHEBI:49883"/>
        <label>1</label>
    </ligand>
</feature>
<feature type="binding site" evidence="1">
    <location>
        <position position="59"/>
    </location>
    <ligand>
        <name>[4Fe-4S] cluster</name>
        <dbReference type="ChEBI" id="CHEBI:49883"/>
        <label>1</label>
    </ligand>
</feature>
<feature type="binding site" evidence="1">
    <location>
        <position position="93"/>
    </location>
    <ligand>
        <name>[4Fe-4S] cluster</name>
        <dbReference type="ChEBI" id="CHEBI:49883"/>
        <label>1</label>
    </ligand>
</feature>
<feature type="binding site" evidence="1">
    <location>
        <position position="178"/>
    </location>
    <ligand>
        <name>[4Fe-4S] cluster</name>
        <dbReference type="ChEBI" id="CHEBI:49883"/>
        <label>2</label>
        <note>4Fe-4S-S-AdoMet</note>
    </ligand>
</feature>
<feature type="binding site" evidence="1">
    <location>
        <position position="182"/>
    </location>
    <ligand>
        <name>[4Fe-4S] cluster</name>
        <dbReference type="ChEBI" id="CHEBI:49883"/>
        <label>2</label>
        <note>4Fe-4S-S-AdoMet</note>
    </ligand>
</feature>
<feature type="binding site" evidence="1">
    <location>
        <position position="185"/>
    </location>
    <ligand>
        <name>[4Fe-4S] cluster</name>
        <dbReference type="ChEBI" id="CHEBI:49883"/>
        <label>2</label>
        <note>4Fe-4S-S-AdoMet</note>
    </ligand>
</feature>
<accession>Q31IF4</accession>
<gene>
    <name evidence="1" type="primary">miaB</name>
    <name type="ordered locus">Tcr_0473</name>
</gene>
<name>MIAB_HYDCU</name>
<organism>
    <name type="scientific">Hydrogenovibrio crunogenus (strain DSM 25203 / XCL-2)</name>
    <name type="common">Thiomicrospira crunogena</name>
    <dbReference type="NCBI Taxonomy" id="317025"/>
    <lineage>
        <taxon>Bacteria</taxon>
        <taxon>Pseudomonadati</taxon>
        <taxon>Pseudomonadota</taxon>
        <taxon>Gammaproteobacteria</taxon>
        <taxon>Thiotrichales</taxon>
        <taxon>Piscirickettsiaceae</taxon>
        <taxon>Hydrogenovibrio</taxon>
    </lineage>
</organism>
<comment type="function">
    <text evidence="1">Catalyzes the methylthiolation of N6-(dimethylallyl)adenosine (i(6)A), leading to the formation of 2-methylthio-N6-(dimethylallyl)adenosine (ms(2)i(6)A) at position 37 in tRNAs that read codons beginning with uridine.</text>
</comment>
<comment type="catalytic activity">
    <reaction evidence="1">
        <text>N(6)-dimethylallyladenosine(37) in tRNA + (sulfur carrier)-SH + AH2 + 2 S-adenosyl-L-methionine = 2-methylsulfanyl-N(6)-dimethylallyladenosine(37) in tRNA + (sulfur carrier)-H + 5'-deoxyadenosine + L-methionine + A + S-adenosyl-L-homocysteine + 2 H(+)</text>
        <dbReference type="Rhea" id="RHEA:37067"/>
        <dbReference type="Rhea" id="RHEA-COMP:10375"/>
        <dbReference type="Rhea" id="RHEA-COMP:10376"/>
        <dbReference type="Rhea" id="RHEA-COMP:14737"/>
        <dbReference type="Rhea" id="RHEA-COMP:14739"/>
        <dbReference type="ChEBI" id="CHEBI:13193"/>
        <dbReference type="ChEBI" id="CHEBI:15378"/>
        <dbReference type="ChEBI" id="CHEBI:17319"/>
        <dbReference type="ChEBI" id="CHEBI:17499"/>
        <dbReference type="ChEBI" id="CHEBI:29917"/>
        <dbReference type="ChEBI" id="CHEBI:57844"/>
        <dbReference type="ChEBI" id="CHEBI:57856"/>
        <dbReference type="ChEBI" id="CHEBI:59789"/>
        <dbReference type="ChEBI" id="CHEBI:64428"/>
        <dbReference type="ChEBI" id="CHEBI:74415"/>
        <dbReference type="ChEBI" id="CHEBI:74417"/>
        <dbReference type="EC" id="2.8.4.3"/>
    </reaction>
</comment>
<comment type="cofactor">
    <cofactor evidence="1">
        <name>[4Fe-4S] cluster</name>
        <dbReference type="ChEBI" id="CHEBI:49883"/>
    </cofactor>
    <text evidence="1">Binds 2 [4Fe-4S] clusters. One cluster is coordinated with 3 cysteines and an exchangeable S-adenosyl-L-methionine.</text>
</comment>
<comment type="subunit">
    <text evidence="1">Monomer.</text>
</comment>
<comment type="subcellular location">
    <subcellularLocation>
        <location evidence="1">Cytoplasm</location>
    </subcellularLocation>
</comment>
<comment type="similarity">
    <text evidence="1">Belongs to the methylthiotransferase family. MiaB subfamily.</text>
</comment>
<reference key="1">
    <citation type="journal article" date="2006" name="PLoS Biol.">
        <title>The genome of deep-sea vent chemolithoautotroph Thiomicrospira crunogena XCL-2.</title>
        <authorList>
            <person name="Scott K.M."/>
            <person name="Sievert S.M."/>
            <person name="Abril F.N."/>
            <person name="Ball L.A."/>
            <person name="Barrett C.J."/>
            <person name="Blake R.A."/>
            <person name="Boller A.J."/>
            <person name="Chain P.S.G."/>
            <person name="Clark J.A."/>
            <person name="Davis C.R."/>
            <person name="Detter C."/>
            <person name="Do K.F."/>
            <person name="Dobrinski K.P."/>
            <person name="Faza B.I."/>
            <person name="Fitzpatrick K.A."/>
            <person name="Freyermuth S.K."/>
            <person name="Harmer T.L."/>
            <person name="Hauser L.J."/>
            <person name="Huegler M."/>
            <person name="Kerfeld C.A."/>
            <person name="Klotz M.G."/>
            <person name="Kong W.W."/>
            <person name="Land M."/>
            <person name="Lapidus A."/>
            <person name="Larimer F.W."/>
            <person name="Longo D.L."/>
            <person name="Lucas S."/>
            <person name="Malfatti S.A."/>
            <person name="Massey S.E."/>
            <person name="Martin D.D."/>
            <person name="McCuddin Z."/>
            <person name="Meyer F."/>
            <person name="Moore J.L."/>
            <person name="Ocampo L.H. Jr."/>
            <person name="Paul J.H."/>
            <person name="Paulsen I.T."/>
            <person name="Reep D.K."/>
            <person name="Ren Q."/>
            <person name="Ross R.L."/>
            <person name="Sato P.Y."/>
            <person name="Thomas P."/>
            <person name="Tinkham L.E."/>
            <person name="Zeruth G.T."/>
        </authorList>
    </citation>
    <scope>NUCLEOTIDE SEQUENCE [LARGE SCALE GENOMIC DNA]</scope>
    <source>
        <strain>DSM 25203 / XCL-2</strain>
    </source>
</reference>
<proteinExistence type="inferred from homology"/>
<evidence type="ECO:0000255" key="1">
    <source>
        <dbReference type="HAMAP-Rule" id="MF_01864"/>
    </source>
</evidence>
<evidence type="ECO:0000255" key="2">
    <source>
        <dbReference type="PROSITE-ProRule" id="PRU01266"/>
    </source>
</evidence>
<protein>
    <recommendedName>
        <fullName evidence="1">tRNA-2-methylthio-N(6)-dimethylallyladenosine synthase</fullName>
        <ecNumber evidence="1">2.8.4.3</ecNumber>
    </recommendedName>
    <alternativeName>
        <fullName evidence="1">(Dimethylallyl)adenosine tRNA methylthiotransferase MiaB</fullName>
    </alternativeName>
    <alternativeName>
        <fullName evidence="1">tRNA-i(6)A37 methylthiotransferase</fullName>
    </alternativeName>
</protein>
<dbReference type="EC" id="2.8.4.3" evidence="1"/>
<dbReference type="EMBL" id="CP000109">
    <property type="protein sequence ID" value="ABB41069.1"/>
    <property type="molecule type" value="Genomic_DNA"/>
</dbReference>
<dbReference type="SMR" id="Q31IF4"/>
<dbReference type="STRING" id="317025.Tcr_0473"/>
<dbReference type="KEGG" id="tcx:Tcr_0473"/>
<dbReference type="eggNOG" id="COG0621">
    <property type="taxonomic scope" value="Bacteria"/>
</dbReference>
<dbReference type="HOGENOM" id="CLU_018697_2_0_6"/>
<dbReference type="OrthoDB" id="9805215at2"/>
<dbReference type="GO" id="GO:0005829">
    <property type="term" value="C:cytosol"/>
    <property type="evidence" value="ECO:0007669"/>
    <property type="project" value="TreeGrafter"/>
</dbReference>
<dbReference type="GO" id="GO:0051539">
    <property type="term" value="F:4 iron, 4 sulfur cluster binding"/>
    <property type="evidence" value="ECO:0007669"/>
    <property type="project" value="UniProtKB-UniRule"/>
</dbReference>
<dbReference type="GO" id="GO:0046872">
    <property type="term" value="F:metal ion binding"/>
    <property type="evidence" value="ECO:0007669"/>
    <property type="project" value="UniProtKB-KW"/>
</dbReference>
<dbReference type="GO" id="GO:0035597">
    <property type="term" value="F:N6-isopentenyladenosine methylthiotransferase activity"/>
    <property type="evidence" value="ECO:0007669"/>
    <property type="project" value="TreeGrafter"/>
</dbReference>
<dbReference type="CDD" id="cd01335">
    <property type="entry name" value="Radical_SAM"/>
    <property type="match status" value="1"/>
</dbReference>
<dbReference type="FunFam" id="3.40.50.12160:FF:000001">
    <property type="entry name" value="tRNA-2-methylthio-N(6)-dimethylallyladenosine synthase"/>
    <property type="match status" value="1"/>
</dbReference>
<dbReference type="FunFam" id="3.80.30.20:FF:000001">
    <property type="entry name" value="tRNA-2-methylthio-N(6)-dimethylallyladenosine synthase 2"/>
    <property type="match status" value="1"/>
</dbReference>
<dbReference type="Gene3D" id="3.40.50.12160">
    <property type="entry name" value="Methylthiotransferase, N-terminal domain"/>
    <property type="match status" value="1"/>
</dbReference>
<dbReference type="Gene3D" id="3.80.30.20">
    <property type="entry name" value="tm_1862 like domain"/>
    <property type="match status" value="1"/>
</dbReference>
<dbReference type="HAMAP" id="MF_01864">
    <property type="entry name" value="tRNA_metthiotr_MiaB"/>
    <property type="match status" value="1"/>
</dbReference>
<dbReference type="InterPro" id="IPR006638">
    <property type="entry name" value="Elp3/MiaA/NifB-like_rSAM"/>
</dbReference>
<dbReference type="InterPro" id="IPR005839">
    <property type="entry name" value="Methylthiotransferase"/>
</dbReference>
<dbReference type="InterPro" id="IPR020612">
    <property type="entry name" value="Methylthiotransferase_CS"/>
</dbReference>
<dbReference type="InterPro" id="IPR013848">
    <property type="entry name" value="Methylthiotransferase_N"/>
</dbReference>
<dbReference type="InterPro" id="IPR038135">
    <property type="entry name" value="Methylthiotransferase_N_sf"/>
</dbReference>
<dbReference type="InterPro" id="IPR006463">
    <property type="entry name" value="MiaB_methiolase"/>
</dbReference>
<dbReference type="InterPro" id="IPR007197">
    <property type="entry name" value="rSAM"/>
</dbReference>
<dbReference type="InterPro" id="IPR023404">
    <property type="entry name" value="rSAM_horseshoe"/>
</dbReference>
<dbReference type="InterPro" id="IPR002792">
    <property type="entry name" value="TRAM_dom"/>
</dbReference>
<dbReference type="NCBIfam" id="TIGR01574">
    <property type="entry name" value="miaB-methiolase"/>
    <property type="match status" value="1"/>
</dbReference>
<dbReference type="NCBIfam" id="TIGR00089">
    <property type="entry name" value="MiaB/RimO family radical SAM methylthiotransferase"/>
    <property type="match status" value="1"/>
</dbReference>
<dbReference type="PANTHER" id="PTHR43020">
    <property type="entry name" value="CDK5 REGULATORY SUBUNIT-ASSOCIATED PROTEIN 1"/>
    <property type="match status" value="1"/>
</dbReference>
<dbReference type="PANTHER" id="PTHR43020:SF2">
    <property type="entry name" value="MITOCHONDRIAL TRNA METHYLTHIOTRANSFERASE CDK5RAP1"/>
    <property type="match status" value="1"/>
</dbReference>
<dbReference type="Pfam" id="PF04055">
    <property type="entry name" value="Radical_SAM"/>
    <property type="match status" value="1"/>
</dbReference>
<dbReference type="Pfam" id="PF01938">
    <property type="entry name" value="TRAM"/>
    <property type="match status" value="1"/>
</dbReference>
<dbReference type="Pfam" id="PF00919">
    <property type="entry name" value="UPF0004"/>
    <property type="match status" value="1"/>
</dbReference>
<dbReference type="SFLD" id="SFLDF00273">
    <property type="entry name" value="(dimethylallyl)adenosine_tRNA"/>
    <property type="match status" value="1"/>
</dbReference>
<dbReference type="SFLD" id="SFLDG01082">
    <property type="entry name" value="B12-binding_domain_containing"/>
    <property type="match status" value="1"/>
</dbReference>
<dbReference type="SFLD" id="SFLDG01061">
    <property type="entry name" value="methylthiotransferase"/>
    <property type="match status" value="1"/>
</dbReference>
<dbReference type="SMART" id="SM00729">
    <property type="entry name" value="Elp3"/>
    <property type="match status" value="1"/>
</dbReference>
<dbReference type="SUPFAM" id="SSF102114">
    <property type="entry name" value="Radical SAM enzymes"/>
    <property type="match status" value="1"/>
</dbReference>
<dbReference type="PROSITE" id="PS51449">
    <property type="entry name" value="MTTASE_N"/>
    <property type="match status" value="1"/>
</dbReference>
<dbReference type="PROSITE" id="PS01278">
    <property type="entry name" value="MTTASE_RADICAL"/>
    <property type="match status" value="1"/>
</dbReference>
<dbReference type="PROSITE" id="PS51918">
    <property type="entry name" value="RADICAL_SAM"/>
    <property type="match status" value="1"/>
</dbReference>
<dbReference type="PROSITE" id="PS50926">
    <property type="entry name" value="TRAM"/>
    <property type="match status" value="1"/>
</dbReference>
<sequence>MSELQSRTSPFSGGLFIKTYGCQMNEYDSDRMAKLLEKTYGLNLVETPEEADMLLLNTCSVREKAQEKVFDELGRWKKWKAAKPNRVIGVGGCVASQEGDVIRKRAPLVDVIFGPQTLHRLPAMIEEALALRTATEQDKKLKKRAIIDISFPEIEKFDNLAEPESNGVSAFVSVMEGCSKYCTFCVVPYTRGEEFSRPFSDVMAEIESLAKQGVREVNLLGQNVNAYRGEMPDGEMADLAVLIHAVRAVEGIDRIRFTTSHPNEMTQSLIDCYAEVPELVSHLHLPIQSGSDRVLAMMKRNHMAIEYKATIRKIKKIRPDLSLSGDFIIGFPGETCDDFKETLALVKEMNYDRSFSFIYSPRPGTPAASLPDDVELHMKKRRLQALQAMLNEQTAAISEGMVGTTQRVLVERLSRNSTNEVSGRTENNRVVNFEGPPELIGQFVDVLIEEAYANSLKGKLVATPEAEQFNQRQFYAL</sequence>
<keyword id="KW-0004">4Fe-4S</keyword>
<keyword id="KW-0963">Cytoplasm</keyword>
<keyword id="KW-0408">Iron</keyword>
<keyword id="KW-0411">Iron-sulfur</keyword>
<keyword id="KW-0479">Metal-binding</keyword>
<keyword id="KW-0949">S-adenosyl-L-methionine</keyword>
<keyword id="KW-0808">Transferase</keyword>
<keyword id="KW-0819">tRNA processing</keyword>